<keyword id="KW-0067">ATP-binding</keyword>
<keyword id="KW-0342">GTP-binding</keyword>
<keyword id="KW-0547">Nucleotide-binding</keyword>
<gene>
    <name type="ordered locus">MUL_1815</name>
</gene>
<evidence type="ECO:0000255" key="1">
    <source>
        <dbReference type="HAMAP-Rule" id="MF_00636"/>
    </source>
</evidence>
<sequence>MTNHIAGGGNPPGPEGDASAGIDVVLVTGLSGAGRGTAAKVLEDLGWYVADNLPPQLITRMVDFGLAAGSRITQLAVVMDVRSRGFTGDLDSVRNELATRNITPRVVFMEASDDMLVRRYEQNRRSHPLQGGHTLAEGIAAERKMLEPVRATADLIIDTSTLSVRGLRENIERAFGGDAAAITSVTVESFGFKYGLPMDADMVMDVRFLPNPHWVDELRPLTGQHQAVSDYVLGRPGASEFLQTYHELLSLVVEGYRREGKRYMTVAIGCTGGKHRSVAIAEALVGLLRSNSRLSVRVLHRDLGRE</sequence>
<name>Y1815_MYCUA</name>
<proteinExistence type="inferred from homology"/>
<reference key="1">
    <citation type="journal article" date="2007" name="Genome Res.">
        <title>Reductive evolution and niche adaptation inferred from the genome of Mycobacterium ulcerans, the causative agent of Buruli ulcer.</title>
        <authorList>
            <person name="Stinear T.P."/>
            <person name="Seemann T."/>
            <person name="Pidot S."/>
            <person name="Frigui W."/>
            <person name="Reysset G."/>
            <person name="Garnier T."/>
            <person name="Meurice G."/>
            <person name="Simon D."/>
            <person name="Bouchier C."/>
            <person name="Ma L."/>
            <person name="Tichit M."/>
            <person name="Porter J.L."/>
            <person name="Ryan J."/>
            <person name="Johnson P.D.R."/>
            <person name="Davies J.K."/>
            <person name="Jenkin G.A."/>
            <person name="Small P.L.C."/>
            <person name="Jones L.M."/>
            <person name="Tekaia F."/>
            <person name="Laval F."/>
            <person name="Daffe M."/>
            <person name="Parkhill J."/>
            <person name="Cole S.T."/>
        </authorList>
    </citation>
    <scope>NUCLEOTIDE SEQUENCE [LARGE SCALE GENOMIC DNA]</scope>
    <source>
        <strain>Agy99</strain>
    </source>
</reference>
<accession>A0PPM2</accession>
<dbReference type="EMBL" id="CP000325">
    <property type="protein sequence ID" value="ABL04291.1"/>
    <property type="molecule type" value="Genomic_DNA"/>
</dbReference>
<dbReference type="SMR" id="A0PPM2"/>
<dbReference type="KEGG" id="mul:MUL_1815"/>
<dbReference type="eggNOG" id="COG1660">
    <property type="taxonomic scope" value="Bacteria"/>
</dbReference>
<dbReference type="HOGENOM" id="CLU_059558_0_0_11"/>
<dbReference type="Proteomes" id="UP000000765">
    <property type="component" value="Chromosome"/>
</dbReference>
<dbReference type="GO" id="GO:0005524">
    <property type="term" value="F:ATP binding"/>
    <property type="evidence" value="ECO:0007669"/>
    <property type="project" value="UniProtKB-UniRule"/>
</dbReference>
<dbReference type="GO" id="GO:0005525">
    <property type="term" value="F:GTP binding"/>
    <property type="evidence" value="ECO:0007669"/>
    <property type="project" value="UniProtKB-UniRule"/>
</dbReference>
<dbReference type="HAMAP" id="MF_00636">
    <property type="entry name" value="RapZ_like"/>
    <property type="match status" value="1"/>
</dbReference>
<dbReference type="InterPro" id="IPR027417">
    <property type="entry name" value="P-loop_NTPase"/>
</dbReference>
<dbReference type="InterPro" id="IPR005337">
    <property type="entry name" value="RapZ-like"/>
</dbReference>
<dbReference type="InterPro" id="IPR053930">
    <property type="entry name" value="RapZ-like_N"/>
</dbReference>
<dbReference type="InterPro" id="IPR053931">
    <property type="entry name" value="RapZ_C"/>
</dbReference>
<dbReference type="NCBIfam" id="NF003828">
    <property type="entry name" value="PRK05416.1"/>
    <property type="match status" value="1"/>
</dbReference>
<dbReference type="PANTHER" id="PTHR30448">
    <property type="entry name" value="RNASE ADAPTER PROTEIN RAPZ"/>
    <property type="match status" value="1"/>
</dbReference>
<dbReference type="PANTHER" id="PTHR30448:SF0">
    <property type="entry name" value="RNASE ADAPTER PROTEIN RAPZ"/>
    <property type="match status" value="1"/>
</dbReference>
<dbReference type="Pfam" id="PF22740">
    <property type="entry name" value="PapZ_C"/>
    <property type="match status" value="1"/>
</dbReference>
<dbReference type="Pfam" id="PF03668">
    <property type="entry name" value="RapZ-like_N"/>
    <property type="match status" value="1"/>
</dbReference>
<dbReference type="PIRSF" id="PIRSF005052">
    <property type="entry name" value="P-loopkin"/>
    <property type="match status" value="1"/>
</dbReference>
<dbReference type="SUPFAM" id="SSF52540">
    <property type="entry name" value="P-loop containing nucleoside triphosphate hydrolases"/>
    <property type="match status" value="1"/>
</dbReference>
<comment type="function">
    <text evidence="1">Displays ATPase and GTPase activities.</text>
</comment>
<comment type="similarity">
    <text evidence="1">Belongs to the RapZ-like family.</text>
</comment>
<protein>
    <recommendedName>
        <fullName evidence="1">Nucleotide-binding protein MUL_1815</fullName>
    </recommendedName>
</protein>
<organism>
    <name type="scientific">Mycobacterium ulcerans (strain Agy99)</name>
    <dbReference type="NCBI Taxonomy" id="362242"/>
    <lineage>
        <taxon>Bacteria</taxon>
        <taxon>Bacillati</taxon>
        <taxon>Actinomycetota</taxon>
        <taxon>Actinomycetes</taxon>
        <taxon>Mycobacteriales</taxon>
        <taxon>Mycobacteriaceae</taxon>
        <taxon>Mycobacterium</taxon>
        <taxon>Mycobacterium ulcerans group</taxon>
    </lineage>
</organism>
<feature type="chain" id="PRO_1000130769" description="Nucleotide-binding protein MUL_1815">
    <location>
        <begin position="1"/>
        <end position="306"/>
    </location>
</feature>
<feature type="binding site" evidence="1">
    <location>
        <begin position="29"/>
        <end position="36"/>
    </location>
    <ligand>
        <name>ATP</name>
        <dbReference type="ChEBI" id="CHEBI:30616"/>
    </ligand>
</feature>
<feature type="binding site" evidence="1">
    <location>
        <begin position="80"/>
        <end position="83"/>
    </location>
    <ligand>
        <name>GTP</name>
        <dbReference type="ChEBI" id="CHEBI:37565"/>
    </ligand>
</feature>